<sequence>MGSLGDLPLNRISVLFGSKYSEIDRSALHIRRYLSTHRAATWLEGAVEDLPSVWQDVTKVWPAGEGIHGEARLQQLSAFLRGEGLPSNMEDPMNYLLMPITVLRHLVDFHEFKEAGVNCDIKSMQGFCAGYLAAVAACWEKDQSEFSKVVATMVRTAIFIGAAVDLDELATQRATSIAVRWKTAEAYKPFAATLGRYPGAYMACITDESSVTVTVWEDQAAALVQELERNGLLVKDTRLRGRFHHADHLSAAQDILKLCQQDSRFQLPDTCPAEELPRSNADGDLPTLKSLLSAAIQSILITQADWNLTVSNTLNSLDSSDAKCILSIGAGQFLPRQARSQILNITDSSRGDNLVNGDHDSMTITNGASFVADSINGTAPVPTSIPIAVTGLACRYPQADCVEELWKILEQGLCTVSRMPESRLKPDRLQRKPDGPFWGNFISRPDAFDHRFFKISAREAESMDPQQRLLLQVAYEAMESAGYCGLRATNLPEDVGCYVGVGTEDYSENVGSRNATAFSATGTLQAFNSGRVSHHFGWTGPSVTVDTACSSAAVAIHLACQALQTSDCSVAVAGGVNVMTDPRWSQNLAAASFLSPTGASKAFDANANGYCRGEGAGLVILRPLEAALRDGDPIHAVITGTSVNQGANCSPITVPDSNSQRSLYMKALSLSGLKPEVVSYVEAHGTGTQVGDPIEFESIRKTFAVPSRTERLYVGSIKDNIGHTETSSGVAGLLKTILMLQKGKIPKQANFTQLNPKITVNQEDKMSIPTSSILWKTQKRVAMVTNYGAAGSNAAIVLKEPISTPRALCSDEKERLPSVVPFFVAAQTDESLRAYCQTLKASLLNGAHLESIAVQDLAFNLARKQNRSMEFSVSFTNSSSLTELHDRLDDVISGRMNIEKKTHTSNPVVLCFGGQTGNKASISESLVASSALLRLHLDECESACKALGLPSLFPAIFDSSPNNDIVNLHCVLFSIQYATAKAWIDSGLKVDRMIGHSFGQLTAVCVAGGLSLIDTMQLISTRAHLIRSEWTSEIGVMLSLKGEKNAVRELLDSVPESADLACVNGADSFVAAGSEVAIHEIQKNAAERGIKSQRLDNTHAFHSRLVDPILPGLAKVASTLNYKPLRIPVEACSESEDDWLLPTWEKIVQHSRKPVYFHQAVHRTISRIQGPAIWLEAGTMSPIIGMVRRAVDTPSSVQGHVFCPMDLSGPQAESNLAKITSSLWSNGVPVQFWPFHSSQRGYQWINLPPYQFAKTSHWIEYDPTAFSYQISKHEEPLTEGLKLVQLLKNEGKVSLFRINDNDPMFRMCTAGHAVVEQNLCPASLYFELVARAATTTLPKGTDPTMYHLADLNISAPLVLDMPGSVLLELTQRDSTPGQWAFVLFTREDTLQSVTHATGTISLSPGANNTGISSRFSSLKRLLNPAHWDSIATSPSSSGLKRSTVYQAFRRAVTYAEYYRGVESVYALGHEATGRVNLPSSPTKNSPCDPILIDNFIQVAGIHVNCLSETHDDEVFVCSSVGDVIIGESFVKRDPSVATPWVVYSNYEQESRKKALCDVFVVDEATGSLALCVLAATFTSVSIQSLRRTLTRLTNKGVSPVPVDIAVAAEVAPAVPAASLITATRASSNGDDLRTVQAMLSELLGIPASEIPASASLADVGVDSLMNTEVLSEIKNRFQVVITKSELTAIEDVGALVQRIFPGRSTVHIETHAQPAVGITAINGGSKPSSRGSVPASRVGDDLSGFADKAGELFTASRKSNEHSKATQFLGFCDTVFPQQMELVTAYVVEAFKALGVDLQSLNAGQPIPSVDILPQHSQVMNQLYAVLEYSGLIERSGTSFCRGHCEVNQNATPVLHQRILNDHPHHTSEHKLLHTTGPRLADCLTGAADPLSLLFQDAQARALMQDVYSNAPMFKSATMHLAQYLKNLLSQVNSPRPIKILEIGAGTGGTTDYLLKQLSSVAGLCFEYTFTDISPSLVTLARKRFKTFNSIHYQTLDIEKGPTSEMLGQYDIIVSSNCIHATRSLSTSCSNIQKLLRPQGILCLIELTRNLFWFDLVFGLLEGWWLFNDGRSHALAHESFWDRTLRSSGFNWVDWTDNQSEESNILRLIVASPTRPALSLEATMESSDIHEETVVYGRKDDLDLLADIYYPQILDSDGKSRPVALLIHGGGHIMLSRKDVRHTQVQLLIDMGFLPVSIDYRLCPEVSLLEGPMADACEALAWAQSTLPQLNLQRPDIRPDGNNVVAVGWSSGGHLAMTLAWTAPARGLRAPSAVLSFYCATDYTDPFWTKPNFPYQGDVSIEDVPTQSPFLGLNDRAITSYNPAPSKRALGGWMSPSDPRSMIALHMNWTGQTLSVLFNGHKYKSLVAIAGGDDNVILPKPTLSEIQKACPLSHVCAGRYKSPTFIIHGTLDDLIPVEQSQRTHDQMLANGVESELRVVADAPHLFDMSPNLKNNKDAFRAVADGYEFLRSHVRL</sequence>
<evidence type="ECO:0000250" key="1">
    <source>
        <dbReference type="UniProtKB" id="Q5ATJ7"/>
    </source>
</evidence>
<evidence type="ECO:0000255" key="2"/>
<evidence type="ECO:0000255" key="3">
    <source>
        <dbReference type="PROSITE-ProRule" id="PRU00258"/>
    </source>
</evidence>
<evidence type="ECO:0000255" key="4">
    <source>
        <dbReference type="PROSITE-ProRule" id="PRU01348"/>
    </source>
</evidence>
<evidence type="ECO:0000255" key="5">
    <source>
        <dbReference type="PROSITE-ProRule" id="PRU01363"/>
    </source>
</evidence>
<evidence type="ECO:0000255" key="6">
    <source>
        <dbReference type="PROSITE-ProRule" id="PRU10022"/>
    </source>
</evidence>
<evidence type="ECO:0000269" key="7">
    <source>
    </source>
</evidence>
<evidence type="ECO:0000269" key="8">
    <source>
    </source>
</evidence>
<evidence type="ECO:0000303" key="9">
    <source>
    </source>
</evidence>
<evidence type="ECO:0000305" key="10">
    <source>
    </source>
</evidence>
<evidence type="ECO:0000305" key="11">
    <source>
    </source>
</evidence>
<evidence type="ECO:0000305" key="12">
    <source>
    </source>
</evidence>
<reference key="1">
    <citation type="journal article" date="2016" name="J. Am. Chem. Soc.">
        <title>Discovery of key dioxygenases that diverged the paraherquonin and acetoxydehydroaustin pathways in Penicillium brasilianum.</title>
        <authorList>
            <person name="Matsuda Y."/>
            <person name="Iwabuchi T."/>
            <person name="Fujimoto T."/>
            <person name="Awakawa T."/>
            <person name="Nakashima Y."/>
            <person name="Mori T."/>
            <person name="Zhang H."/>
            <person name="Hayashi F."/>
            <person name="Abe I."/>
        </authorList>
    </citation>
    <scope>NUCLEOTIDE SEQUENCE [GENOMIC DNA]</scope>
    <scope>FUNCTION</scope>
    <scope>PATHWAY</scope>
    <source>
        <strain>ATCC 22354 / NBRC 6234 / CBS 338.59 / FRR 3454 / IMI 68220</strain>
    </source>
</reference>
<reference key="2">
    <citation type="journal article" date="2017" name="Nat. Chem. Biol.">
        <title>Molecular basis for the unusual ring reconstruction in fungal meroterpenoid biogenesis.</title>
        <authorList>
            <person name="Mori T."/>
            <person name="Iwabuchi T."/>
            <person name="Hoshino S."/>
            <person name="Wang H."/>
            <person name="Matsuda Y."/>
            <person name="Abe I."/>
        </authorList>
    </citation>
    <scope>FUNCTION</scope>
</reference>
<reference key="3">
    <citation type="journal article" date="2018" name="Nat. Commun.">
        <title>Structure function and engineering of multifunctional non-heme iron dependent oxygenases in fungal meroterpenoid biosynthesis.</title>
        <authorList>
            <person name="Nakashima Y."/>
            <person name="Mori T."/>
            <person name="Nakamura H."/>
            <person name="Awakawa T."/>
            <person name="Hoshino S."/>
            <person name="Senda M."/>
            <person name="Senda T."/>
            <person name="Abe I."/>
        </authorList>
    </citation>
    <scope>FUNCTION</scope>
</reference>
<gene>
    <name evidence="9" type="primary">prhL</name>
</gene>
<feature type="chain" id="PRO_0000449176" description="Non-reducing polyketide synthase prhL">
    <location>
        <begin position="1"/>
        <end position="2475"/>
    </location>
</feature>
<feature type="domain" description="Ketosynthase family 3 (KS3)" evidence="4">
    <location>
        <begin position="384"/>
        <end position="800"/>
    </location>
</feature>
<feature type="domain" description="PKS/mFAS DH" evidence="5">
    <location>
        <begin position="1279"/>
        <end position="1586"/>
    </location>
</feature>
<feature type="domain" description="Carrier" evidence="3">
    <location>
        <begin position="1626"/>
        <end position="1703"/>
    </location>
</feature>
<feature type="region of interest" description="N-terminal acylcarrier protein transacylase domain (SAT)" evidence="2">
    <location>
        <begin position="14"/>
        <end position="253"/>
    </location>
</feature>
<feature type="region of interest" description="Malonyl-CoA:ACP transacylase (MAT) domain" evidence="2">
    <location>
        <begin position="910"/>
        <end position="1212"/>
    </location>
</feature>
<feature type="region of interest" description="N-terminal hotdog fold" evidence="5">
    <location>
        <begin position="1279"/>
        <end position="1407"/>
    </location>
</feature>
<feature type="region of interest" description="Product template (PT) domain" evidence="2">
    <location>
        <begin position="1282"/>
        <end position="1585"/>
    </location>
</feature>
<feature type="region of interest" description="C-terminal hotdog fold" evidence="5">
    <location>
        <begin position="1435"/>
        <end position="1586"/>
    </location>
</feature>
<feature type="region of interest" description="Methyltransferase (CMeT) domain" evidence="2">
    <location>
        <begin position="1865"/>
        <end position="2098"/>
    </location>
</feature>
<feature type="region of interest" description="Thioesterase (TE) domain" evidence="2">
    <location>
        <begin position="2127"/>
        <end position="2475"/>
    </location>
</feature>
<feature type="active site" description="For beta-ketoacyl synthase activity" evidence="4">
    <location>
        <position position="549"/>
    </location>
</feature>
<feature type="active site" description="For beta-ketoacyl synthase activity" evidence="4">
    <location>
        <position position="684"/>
    </location>
</feature>
<feature type="active site" description="For beta-ketoacyl synthase activity" evidence="4">
    <location>
        <position position="723"/>
    </location>
</feature>
<feature type="active site" description="For acyl/malonyl transferase activity" evidence="6">
    <location>
        <position position="997"/>
    </location>
</feature>
<feature type="active site" description="Proton acceptor; for dehydratase activity" evidence="5">
    <location>
        <position position="1312"/>
    </location>
</feature>
<feature type="active site" description="Proton donor; for dehydratase activity" evidence="5">
    <location>
        <position position="1493"/>
    </location>
</feature>
<feature type="active site" description="For thioesterase activity" evidence="1">
    <location>
        <position position="2250"/>
    </location>
</feature>
<feature type="active site" description="For thioesterase activity" evidence="1">
    <location>
        <position position="2412"/>
    </location>
</feature>
<feature type="modified residue" description="O-(pantetheine 4'-phosphoryl)serine" evidence="3">
    <location>
        <position position="1663"/>
    </location>
</feature>
<protein>
    <recommendedName>
        <fullName evidence="9">Non-reducing polyketide synthase prhL</fullName>
        <ecNumber evidence="1">2.3.1.-</ecNumber>
    </recommendedName>
    <alternativeName>
        <fullName evidence="9">Paraherquonin biosynthesis cluster protein L</fullName>
    </alternativeName>
</protein>
<name>PRHL_PENBI</name>
<accession>A0A1E1FFN8</accession>
<organism>
    <name type="scientific">Penicillium brasilianum</name>
    <dbReference type="NCBI Taxonomy" id="104259"/>
    <lineage>
        <taxon>Eukaryota</taxon>
        <taxon>Fungi</taxon>
        <taxon>Dikarya</taxon>
        <taxon>Ascomycota</taxon>
        <taxon>Pezizomycotina</taxon>
        <taxon>Eurotiomycetes</taxon>
        <taxon>Eurotiomycetidae</taxon>
        <taxon>Eurotiales</taxon>
        <taxon>Aspergillaceae</taxon>
        <taxon>Penicillium</taxon>
    </lineage>
</organism>
<keyword id="KW-0489">Methyltransferase</keyword>
<keyword id="KW-0511">Multifunctional enzyme</keyword>
<keyword id="KW-0596">Phosphopantetheine</keyword>
<keyword id="KW-0597">Phosphoprotein</keyword>
<keyword id="KW-0808">Transferase</keyword>
<comment type="function">
    <text evidence="1 7 8 10 11 12">Non-reducing polyketide synthase; part of the gene cluster that mediates the biosynthesis of paraherquonin, a meroterpenoid with a unique, highly congested hexacyclic molecular architecture (PubMed:27602587). The first step of the pathway is the synthesis of 3,5-dimethylorsellinic acid (DMOA) by the polyketide synthase prhL (By similarity). Synthesis of DMOA is followed by farnesylation by the prenyltransferase prhE, methylesterification by the methyl-transferase prhM, epoxidation of the prenyl chain by the flavin-dependent monooxygenase prhF, and cyclization of the farnesyl moiety by the terpene cyclase prhH, to yield the tetracyclic intermediate, protoaustinoid A (By similarity). The short chain dehydrogenase prhI then oxidizes the C-3 alcohol group of the terpene cyclase product to transform protoaustinoid A into protoaustinoid B (PubMed:27602587). The FAD-binding monooxygenase prhJ catalyzes the oxidation of protoaustinoid B into preaustinoid A which is further oxidized into preaustinoid A1 by FAD-binding monooxygenase phrK (PubMed:27602587). Finally, prhA leads to berkeleydione via the berkeleyone B intermediate (PubMed:27602587, PubMed:29317628). PrhA is a multifunctional dioxygenase that first desaturates at C5-C6 to form berkeleyone B, followed by rearrangement of the A/B-ring to form the cycloheptadiene moiety in berkeleydione (PubMed:27602587, PubMed:29317628). Berkeleydione serves as the key intermediate for the biosynthesis of paraherquonin as well as many other meroterpenoids (Probable). The cytochrome P450 monooxygenases prhB, prhD, and prhN, as well as the isomerase prhC, are probably involved in the late stage of paraherquonin biosynthesis, after the production of berkeleydione (Probable). Especially prhC might be a multifunctional enzyme that catalyzes the D-ring expansion via intramolecular methoxy rearrangement, as well as the hydrolysis of the expanded D-ring (Probable).</text>
</comment>
<comment type="catalytic activity">
    <reaction evidence="1">
        <text>3 malonyl-CoA + acetyl-CoA + 2 S-adenosyl-L-methionine = 3,5-dimethylorsellinate + 2 S-adenosyl-L-homocysteine + 3 CO2 + 4 CoA</text>
        <dbReference type="Rhea" id="RHEA:49628"/>
        <dbReference type="ChEBI" id="CHEBI:16526"/>
        <dbReference type="ChEBI" id="CHEBI:57287"/>
        <dbReference type="ChEBI" id="CHEBI:57288"/>
        <dbReference type="ChEBI" id="CHEBI:57384"/>
        <dbReference type="ChEBI" id="CHEBI:57856"/>
        <dbReference type="ChEBI" id="CHEBI:59789"/>
        <dbReference type="ChEBI" id="CHEBI:131856"/>
    </reaction>
    <physiologicalReaction direction="left-to-right" evidence="1">
        <dbReference type="Rhea" id="RHEA:49629"/>
    </physiologicalReaction>
</comment>
<comment type="pathway">
    <text evidence="10">Secondary metabolite biosynthesis; terpenoid biosynthesis.</text>
</comment>
<comment type="domain">
    <text evidence="10">Multidomain protein; including a starter unit:ACP transacylase (SAT) that selects the starter unit; a ketosynthase (KS) that catalyzes repeated decarboxylative condensation to elongate the polyketide backbone; a malonyl-CoA:ACP transacylase (MAT) that selects and transfers the extender unit malonyl-CoA; a product template (PT) domain that controls the immediate cyclization regioselectivity of the reactive polyketide backbone; and an acyl-carrier protein (ACP) that serves as the tether of the growing and completed polyketide via its phosphopantetheinyl arm.</text>
</comment>
<comment type="domain">
    <text evidence="10">The release of the polyketide chain from the non-reducing polyketide synthase is mediated by the thioesterase (TE) domain localized at the C-terminus of the protein.</text>
</comment>
<dbReference type="EC" id="2.3.1.-" evidence="1"/>
<dbReference type="EMBL" id="LC127182">
    <property type="protein sequence ID" value="BAV69313.1"/>
    <property type="molecule type" value="Genomic_DNA"/>
</dbReference>
<dbReference type="SMR" id="A0A1E1FFN8"/>
<dbReference type="ESTHER" id="penbi-prhl">
    <property type="family name" value="BD-FAE"/>
</dbReference>
<dbReference type="UniPathway" id="UPA00213"/>
<dbReference type="GO" id="GO:0004315">
    <property type="term" value="F:3-oxoacyl-[acyl-carrier-protein] synthase activity"/>
    <property type="evidence" value="ECO:0007669"/>
    <property type="project" value="InterPro"/>
</dbReference>
<dbReference type="GO" id="GO:0004312">
    <property type="term" value="F:fatty acid synthase activity"/>
    <property type="evidence" value="ECO:0007669"/>
    <property type="project" value="TreeGrafter"/>
</dbReference>
<dbReference type="GO" id="GO:0016787">
    <property type="term" value="F:hydrolase activity"/>
    <property type="evidence" value="ECO:0007669"/>
    <property type="project" value="InterPro"/>
</dbReference>
<dbReference type="GO" id="GO:0008168">
    <property type="term" value="F:methyltransferase activity"/>
    <property type="evidence" value="ECO:0007669"/>
    <property type="project" value="UniProtKB-KW"/>
</dbReference>
<dbReference type="GO" id="GO:0017000">
    <property type="term" value="P:antibiotic biosynthetic process"/>
    <property type="evidence" value="ECO:0007669"/>
    <property type="project" value="UniProtKB-ARBA"/>
</dbReference>
<dbReference type="GO" id="GO:0006633">
    <property type="term" value="P:fatty acid biosynthetic process"/>
    <property type="evidence" value="ECO:0007669"/>
    <property type="project" value="InterPro"/>
</dbReference>
<dbReference type="GO" id="GO:0032259">
    <property type="term" value="P:methylation"/>
    <property type="evidence" value="ECO:0007669"/>
    <property type="project" value="UniProtKB-KW"/>
</dbReference>
<dbReference type="GO" id="GO:0030639">
    <property type="term" value="P:polyketide biosynthetic process"/>
    <property type="evidence" value="ECO:0007669"/>
    <property type="project" value="UniProtKB-ARBA"/>
</dbReference>
<dbReference type="GO" id="GO:0016114">
    <property type="term" value="P:terpenoid biosynthetic process"/>
    <property type="evidence" value="ECO:0007669"/>
    <property type="project" value="UniProtKB-UniPathway"/>
</dbReference>
<dbReference type="GO" id="GO:0009403">
    <property type="term" value="P:toxin biosynthetic process"/>
    <property type="evidence" value="ECO:0007669"/>
    <property type="project" value="UniProtKB-ARBA"/>
</dbReference>
<dbReference type="CDD" id="cd02440">
    <property type="entry name" value="AdoMet_MTases"/>
    <property type="match status" value="1"/>
</dbReference>
<dbReference type="CDD" id="cd00833">
    <property type="entry name" value="PKS"/>
    <property type="match status" value="1"/>
</dbReference>
<dbReference type="Gene3D" id="3.30.70.3290">
    <property type="match status" value="1"/>
</dbReference>
<dbReference type="Gene3D" id="3.40.47.10">
    <property type="match status" value="1"/>
</dbReference>
<dbReference type="Gene3D" id="1.10.1200.10">
    <property type="entry name" value="ACP-like"/>
    <property type="match status" value="1"/>
</dbReference>
<dbReference type="Gene3D" id="3.40.50.1820">
    <property type="entry name" value="alpha/beta hydrolase"/>
    <property type="match status" value="1"/>
</dbReference>
<dbReference type="Gene3D" id="3.40.366.10">
    <property type="entry name" value="Malonyl-Coenzyme A Acyl Carrier Protein, domain 2"/>
    <property type="match status" value="2"/>
</dbReference>
<dbReference type="Gene3D" id="3.10.129.110">
    <property type="entry name" value="Polyketide synthase dehydratase"/>
    <property type="match status" value="1"/>
</dbReference>
<dbReference type="Gene3D" id="3.40.50.150">
    <property type="entry name" value="Vaccinia Virus protein VP39"/>
    <property type="match status" value="1"/>
</dbReference>
<dbReference type="InterPro" id="IPR013094">
    <property type="entry name" value="AB_hydrolase_3"/>
</dbReference>
<dbReference type="InterPro" id="IPR029058">
    <property type="entry name" value="AB_hydrolase_fold"/>
</dbReference>
<dbReference type="InterPro" id="IPR001227">
    <property type="entry name" value="Ac_transferase_dom_sf"/>
</dbReference>
<dbReference type="InterPro" id="IPR036736">
    <property type="entry name" value="ACP-like_sf"/>
</dbReference>
<dbReference type="InterPro" id="IPR014043">
    <property type="entry name" value="Acyl_transferase_dom"/>
</dbReference>
<dbReference type="InterPro" id="IPR016035">
    <property type="entry name" value="Acyl_Trfase/lysoPLipase"/>
</dbReference>
<dbReference type="InterPro" id="IPR018201">
    <property type="entry name" value="Ketoacyl_synth_AS"/>
</dbReference>
<dbReference type="InterPro" id="IPR014031">
    <property type="entry name" value="Ketoacyl_synth_C"/>
</dbReference>
<dbReference type="InterPro" id="IPR014030">
    <property type="entry name" value="Ketoacyl_synth_N"/>
</dbReference>
<dbReference type="InterPro" id="IPR016036">
    <property type="entry name" value="Malonyl_transacylase_ACP-bd"/>
</dbReference>
<dbReference type="InterPro" id="IPR013217">
    <property type="entry name" value="Methyltransf_12"/>
</dbReference>
<dbReference type="InterPro" id="IPR020841">
    <property type="entry name" value="PKS_Beta-ketoAc_synthase_dom"/>
</dbReference>
<dbReference type="InterPro" id="IPR042104">
    <property type="entry name" value="PKS_dehydratase_sf"/>
</dbReference>
<dbReference type="InterPro" id="IPR049551">
    <property type="entry name" value="PKS_DH_C"/>
</dbReference>
<dbReference type="InterPro" id="IPR049552">
    <property type="entry name" value="PKS_DH_N"/>
</dbReference>
<dbReference type="InterPro" id="IPR049900">
    <property type="entry name" value="PKS_mFAS_DH"/>
</dbReference>
<dbReference type="InterPro" id="IPR050091">
    <property type="entry name" value="PKS_NRPS_Biosynth_Enz"/>
</dbReference>
<dbReference type="InterPro" id="IPR009081">
    <property type="entry name" value="PP-bd_ACP"/>
</dbReference>
<dbReference type="InterPro" id="IPR029063">
    <property type="entry name" value="SAM-dependent_MTases_sf"/>
</dbReference>
<dbReference type="InterPro" id="IPR016039">
    <property type="entry name" value="Thiolase-like"/>
</dbReference>
<dbReference type="PANTHER" id="PTHR43775">
    <property type="entry name" value="FATTY ACID SYNTHASE"/>
    <property type="match status" value="1"/>
</dbReference>
<dbReference type="PANTHER" id="PTHR43775:SF21">
    <property type="entry name" value="NON-REDUCING POLYKETIDE SYNTHASE AUSA-RELATED"/>
    <property type="match status" value="1"/>
</dbReference>
<dbReference type="Pfam" id="PF07859">
    <property type="entry name" value="Abhydrolase_3"/>
    <property type="match status" value="1"/>
</dbReference>
<dbReference type="Pfam" id="PF00698">
    <property type="entry name" value="Acyl_transf_1"/>
    <property type="match status" value="1"/>
</dbReference>
<dbReference type="Pfam" id="PF18558">
    <property type="entry name" value="HTH_51"/>
    <property type="match status" value="1"/>
</dbReference>
<dbReference type="Pfam" id="PF00109">
    <property type="entry name" value="ketoacyl-synt"/>
    <property type="match status" value="1"/>
</dbReference>
<dbReference type="Pfam" id="PF02801">
    <property type="entry name" value="Ketoacyl-synt_C"/>
    <property type="match status" value="1"/>
</dbReference>
<dbReference type="Pfam" id="PF08242">
    <property type="entry name" value="Methyltransf_12"/>
    <property type="match status" value="1"/>
</dbReference>
<dbReference type="Pfam" id="PF21089">
    <property type="entry name" value="PKS_DH_N"/>
    <property type="match status" value="1"/>
</dbReference>
<dbReference type="Pfam" id="PF00550">
    <property type="entry name" value="PP-binding"/>
    <property type="match status" value="1"/>
</dbReference>
<dbReference type="Pfam" id="PF14765">
    <property type="entry name" value="PS-DH"/>
    <property type="match status" value="1"/>
</dbReference>
<dbReference type="SMART" id="SM00827">
    <property type="entry name" value="PKS_AT"/>
    <property type="match status" value="1"/>
</dbReference>
<dbReference type="SMART" id="SM00825">
    <property type="entry name" value="PKS_KS"/>
    <property type="match status" value="1"/>
</dbReference>
<dbReference type="SUPFAM" id="SSF47336">
    <property type="entry name" value="ACP-like"/>
    <property type="match status" value="1"/>
</dbReference>
<dbReference type="SUPFAM" id="SSF53474">
    <property type="entry name" value="alpha/beta-Hydrolases"/>
    <property type="match status" value="1"/>
</dbReference>
<dbReference type="SUPFAM" id="SSF52151">
    <property type="entry name" value="FabD/lysophospholipase-like"/>
    <property type="match status" value="1"/>
</dbReference>
<dbReference type="SUPFAM" id="SSF55048">
    <property type="entry name" value="Probable ACP-binding domain of malonyl-CoA ACP transacylase"/>
    <property type="match status" value="1"/>
</dbReference>
<dbReference type="SUPFAM" id="SSF53335">
    <property type="entry name" value="S-adenosyl-L-methionine-dependent methyltransferases"/>
    <property type="match status" value="1"/>
</dbReference>
<dbReference type="SUPFAM" id="SSF53901">
    <property type="entry name" value="Thiolase-like"/>
    <property type="match status" value="1"/>
</dbReference>
<dbReference type="PROSITE" id="PS50075">
    <property type="entry name" value="CARRIER"/>
    <property type="match status" value="1"/>
</dbReference>
<dbReference type="PROSITE" id="PS00606">
    <property type="entry name" value="KS3_1"/>
    <property type="match status" value="1"/>
</dbReference>
<dbReference type="PROSITE" id="PS52004">
    <property type="entry name" value="KS3_2"/>
    <property type="match status" value="1"/>
</dbReference>
<dbReference type="PROSITE" id="PS52019">
    <property type="entry name" value="PKS_MFAS_DH"/>
    <property type="match status" value="1"/>
</dbReference>
<proteinExistence type="inferred from homology"/>